<sequence>MVKLNDEEGAAMAPGHQPTNGYLLVPGGEPPGKVSAELQNGPKAVCLTLNGVSRDSLAAAAEALCRPQTPLAPEEETQTRLLPTGPGEETPGTEGSPAPQTALSARRFVVLLIFSLYSLVNAFQWIQYSVISNVFEGFYGVSSLHIDWLSMVYMLAYVPLIFPATWLLDTRGLRLTALLGSGLNCLGAWVKCASVQQHLFWVTMLGQCLCSVAQVFILGLPSRIASVWFGPKEVSTACATAVLGNQLGAAIGFLLPPVLVPNTQNNTDLLACNISTMFYGTSSVATFLCFLTIIAFKEKPQYPPSQAQAALQNSPPAKYSYKKSIRNLFRNVPFVLLLITYGIITGAFYSVSTLLNQMILTYYKGEEVSAGKIGLTLVVAGMVGSILCGFWLDYTKIYKQTTLIVYILSFLGMVIFTFTLDLGYGIVVFVTGGVLGFFMTGYLPLGFEFAVEITYPESEGTSSGLLNAAAQIFGILFTLAQGKLTTDYSPKAGNIFLCVWLFLGIILTALIKSDLRRHNINIGIANGDIKAVPVEDTVEDSPTDKESKTIVMSKQSESAI</sequence>
<accession>Q9N1F2</accession>
<protein>
    <recommendedName>
        <fullName>Choline/ethanolamine transporter FLVCR1</fullName>
    </recommendedName>
    <alternativeName>
        <fullName evidence="5">Feline leukemia virus subgroup C receptor 1</fullName>
    </alternativeName>
    <alternativeName>
        <fullName evidence="1">Heme transporter FLVCR1</fullName>
    </alternativeName>
</protein>
<organism>
    <name type="scientific">Felis catus</name>
    <name type="common">Cat</name>
    <name type="synonym">Felis silvestris catus</name>
    <dbReference type="NCBI Taxonomy" id="9685"/>
    <lineage>
        <taxon>Eukaryota</taxon>
        <taxon>Metazoa</taxon>
        <taxon>Chordata</taxon>
        <taxon>Craniata</taxon>
        <taxon>Vertebrata</taxon>
        <taxon>Euteleostomi</taxon>
        <taxon>Mammalia</taxon>
        <taxon>Eutheria</taxon>
        <taxon>Laurasiatheria</taxon>
        <taxon>Carnivora</taxon>
        <taxon>Feliformia</taxon>
        <taxon>Felidae</taxon>
        <taxon>Felinae</taxon>
        <taxon>Felis</taxon>
    </lineage>
</organism>
<feature type="chain" id="PRO_0000084843" description="Choline/ethanolamine transporter FLVCR1">
    <location>
        <begin position="1"/>
        <end position="560"/>
    </location>
</feature>
<feature type="topological domain" description="Cytoplasmic" evidence="1">
    <location>
        <begin position="1"/>
        <end position="99"/>
    </location>
</feature>
<feature type="transmembrane region" description="Helical; Name=TM1" evidence="1">
    <location>
        <begin position="100"/>
        <end position="124"/>
    </location>
</feature>
<feature type="topological domain" description="Extracellular" evidence="1">
    <location>
        <begin position="125"/>
        <end position="142"/>
    </location>
</feature>
<feature type="transmembrane region" description="Helical; Name=TM2" evidence="1">
    <location>
        <begin position="143"/>
        <end position="170"/>
    </location>
</feature>
<feature type="topological domain" description="Cytoplasmic" evidence="1">
    <location>
        <begin position="171"/>
        <end position="172"/>
    </location>
</feature>
<feature type="transmembrane region" description="Helical; Name=TM3" evidence="1">
    <location>
        <begin position="173"/>
        <end position="192"/>
    </location>
</feature>
<feature type="topological domain" description="Extracellular" evidence="1 6">
    <location>
        <begin position="193"/>
        <end position="199"/>
    </location>
</feature>
<feature type="transmembrane region" description="Helical; Name=TM4" evidence="1">
    <location>
        <begin position="200"/>
        <end position="228"/>
    </location>
</feature>
<feature type="topological domain" description="Cytoplasmic" evidence="1">
    <location>
        <begin position="229"/>
        <end position="233"/>
    </location>
</feature>
<feature type="transmembrane region" description="Helical; Name=TM5" evidence="1">
    <location>
        <begin position="234"/>
        <end position="259"/>
    </location>
</feature>
<feature type="topological domain" description="Extracellular" evidence="1">
    <location>
        <begin position="260"/>
        <end position="265"/>
    </location>
</feature>
<feature type="transmembrane region" description="Helical; Name=TM6" evidence="1">
    <location>
        <begin position="266"/>
        <end position="295"/>
    </location>
</feature>
<feature type="topological domain" description="Cytoplasmic" evidence="1">
    <location>
        <begin position="296"/>
        <end position="331"/>
    </location>
</feature>
<feature type="transmembrane region" description="Helical; Name=TM7" evidence="1">
    <location>
        <begin position="332"/>
        <end position="362"/>
    </location>
</feature>
<feature type="topological domain" description="Extracellular" evidence="1">
    <location>
        <begin position="363"/>
        <end position="366"/>
    </location>
</feature>
<feature type="transmembrane region" description="Helical; Name=TM8" evidence="1">
    <location>
        <begin position="367"/>
        <end position="395"/>
    </location>
</feature>
<feature type="topological domain" description="Cytoplasmic" evidence="1">
    <location>
        <begin position="396"/>
        <end position="397"/>
    </location>
</feature>
<feature type="transmembrane region" description="Helical; Name=TM9" evidence="1">
    <location>
        <begin position="398"/>
        <end position="420"/>
    </location>
</feature>
<feature type="topological domain" description="Extracellular" evidence="1 6">
    <location>
        <begin position="421"/>
        <end position="423"/>
    </location>
</feature>
<feature type="transmembrane region" description="Helical; Name=TM10" evidence="1">
    <location>
        <begin position="424"/>
        <end position="453"/>
    </location>
</feature>
<feature type="topological domain" description="Cytoplasmic" evidence="1">
    <location>
        <begin position="454"/>
        <end position="461"/>
    </location>
</feature>
<feature type="transmembrane region" description="Helical; Name=TM11" evidence="1">
    <location>
        <begin position="462"/>
        <end position="487"/>
    </location>
</feature>
<feature type="topological domain" description="Extracellular" evidence="1">
    <location>
        <begin position="488"/>
        <end position="489"/>
    </location>
</feature>
<feature type="transmembrane region" description="Helical; Name=TM12" evidence="1">
    <location>
        <begin position="490"/>
        <end position="512"/>
    </location>
</feature>
<feature type="topological domain" description="Cytoplasmic" evidence="1">
    <location>
        <begin position="513"/>
        <end position="560"/>
    </location>
</feature>
<feature type="region of interest" description="Disordered" evidence="3">
    <location>
        <begin position="1"/>
        <end position="22"/>
    </location>
</feature>
<feature type="region of interest" description="Disordered" evidence="3">
    <location>
        <begin position="68"/>
        <end position="99"/>
    </location>
</feature>
<feature type="region of interest" description="Disordered" evidence="3">
    <location>
        <begin position="537"/>
        <end position="560"/>
    </location>
</feature>
<feature type="compositionally biased region" description="Low complexity" evidence="3">
    <location>
        <begin position="83"/>
        <end position="95"/>
    </location>
</feature>
<feature type="compositionally biased region" description="Polar residues" evidence="3">
    <location>
        <begin position="550"/>
        <end position="560"/>
    </location>
</feature>
<feature type="binding site" evidence="1">
    <location>
        <position position="214"/>
    </location>
    <ligand>
        <name>ethanolamine</name>
        <dbReference type="ChEBI" id="CHEBI:57603"/>
    </ligand>
</feature>
<feature type="binding site" evidence="1">
    <location>
        <position position="471"/>
    </location>
    <ligand>
        <name>choline</name>
        <dbReference type="ChEBI" id="CHEBI:15354"/>
    </ligand>
</feature>
<feature type="binding site" evidence="1">
    <location>
        <position position="471"/>
    </location>
    <ligand>
        <name>ethanolamine</name>
        <dbReference type="ChEBI" id="CHEBI:57603"/>
    </ligand>
</feature>
<feature type="modified residue" description="Phosphoserine" evidence="1">
    <location>
        <position position="56"/>
    </location>
</feature>
<feature type="modified residue" description="Phosphoserine" evidence="1">
    <location>
        <position position="541"/>
    </location>
</feature>
<feature type="glycosylation site" description="N-linked (GlcNAc...) asparagine" evidence="2">
    <location>
        <position position="265"/>
    </location>
</feature>
<dbReference type="EMBL" id="AF192387">
    <property type="protein sequence ID" value="AAF37351.1"/>
    <property type="molecule type" value="mRNA"/>
</dbReference>
<dbReference type="RefSeq" id="NP_001009302.1">
    <property type="nucleotide sequence ID" value="NM_001009302.1"/>
</dbReference>
<dbReference type="SMR" id="Q9N1F2"/>
<dbReference type="STRING" id="9685.ENSFCAP00000000192"/>
<dbReference type="TCDB" id="2.A.1.28.7">
    <property type="family name" value="the major facilitator superfamily (mfs)"/>
</dbReference>
<dbReference type="GlyCosmos" id="Q9N1F2">
    <property type="glycosylation" value="2 sites, No reported glycans"/>
</dbReference>
<dbReference type="PaxDb" id="9685-ENSFCAP00000000192"/>
<dbReference type="Ensembl" id="ENSFCAT00000000207.6">
    <property type="protein sequence ID" value="ENSFCAP00000000192.5"/>
    <property type="gene ID" value="ENSFCAG00000000207.6"/>
</dbReference>
<dbReference type="GeneID" id="493854"/>
<dbReference type="KEGG" id="fca:493854"/>
<dbReference type="CTD" id="28982"/>
<dbReference type="VGNC" id="VGNC:97439">
    <property type="gene designation" value="FLVCR1"/>
</dbReference>
<dbReference type="eggNOG" id="KOG2563">
    <property type="taxonomic scope" value="Eukaryota"/>
</dbReference>
<dbReference type="GeneTree" id="ENSGT01030000234625"/>
<dbReference type="HOGENOM" id="CLU_023132_0_0_1"/>
<dbReference type="InParanoid" id="Q9N1F2"/>
<dbReference type="OMA" id="LDLMGHN"/>
<dbReference type="OrthoDB" id="422206at2759"/>
<dbReference type="Proteomes" id="UP000011712">
    <property type="component" value="Chromosome F1"/>
</dbReference>
<dbReference type="Bgee" id="ENSFCAG00000000207">
    <property type="expression patterns" value="Expressed in embryonic head and 10 other cell types or tissues"/>
</dbReference>
<dbReference type="GO" id="GO:0016020">
    <property type="term" value="C:membrane"/>
    <property type="evidence" value="ECO:0000318"/>
    <property type="project" value="GO_Central"/>
</dbReference>
<dbReference type="GO" id="GO:0005739">
    <property type="term" value="C:mitochondrion"/>
    <property type="evidence" value="ECO:0000318"/>
    <property type="project" value="GO_Central"/>
</dbReference>
<dbReference type="GO" id="GO:0005886">
    <property type="term" value="C:plasma membrane"/>
    <property type="evidence" value="ECO:0000250"/>
    <property type="project" value="UniProtKB"/>
</dbReference>
<dbReference type="GO" id="GO:0015220">
    <property type="term" value="F:choline transmembrane transporter activity"/>
    <property type="evidence" value="ECO:0000250"/>
    <property type="project" value="UniProtKB"/>
</dbReference>
<dbReference type="GO" id="GO:0034228">
    <property type="term" value="F:ethanolamine transmembrane transporter activity"/>
    <property type="evidence" value="ECO:0000250"/>
    <property type="project" value="UniProtKB"/>
</dbReference>
<dbReference type="GO" id="GO:0020037">
    <property type="term" value="F:heme binding"/>
    <property type="evidence" value="ECO:0000318"/>
    <property type="project" value="GO_Central"/>
</dbReference>
<dbReference type="GO" id="GO:0015232">
    <property type="term" value="F:heme transmembrane transporter activity"/>
    <property type="evidence" value="ECO:0000250"/>
    <property type="project" value="UniProtKB"/>
</dbReference>
<dbReference type="GO" id="GO:0001618">
    <property type="term" value="F:virus receptor activity"/>
    <property type="evidence" value="ECO:0007669"/>
    <property type="project" value="UniProtKB-KW"/>
</dbReference>
<dbReference type="GO" id="GO:0030218">
    <property type="term" value="P:erythrocyte differentiation"/>
    <property type="evidence" value="ECO:0000318"/>
    <property type="project" value="GO_Central"/>
</dbReference>
<dbReference type="GO" id="GO:0043249">
    <property type="term" value="P:erythrocyte maturation"/>
    <property type="evidence" value="ECO:0007669"/>
    <property type="project" value="UniProtKB-KW"/>
</dbReference>
<dbReference type="GO" id="GO:0097037">
    <property type="term" value="P:heme export"/>
    <property type="evidence" value="ECO:0000250"/>
    <property type="project" value="UniProtKB"/>
</dbReference>
<dbReference type="GO" id="GO:0006839">
    <property type="term" value="P:mitochondrial transport"/>
    <property type="evidence" value="ECO:0000318"/>
    <property type="project" value="GO_Central"/>
</dbReference>
<dbReference type="GO" id="GO:0008654">
    <property type="term" value="P:phospholipid biosynthetic process"/>
    <property type="evidence" value="ECO:0000250"/>
    <property type="project" value="UniProtKB"/>
</dbReference>
<dbReference type="CDD" id="cd17455">
    <property type="entry name" value="MFS_FLVCR1"/>
    <property type="match status" value="1"/>
</dbReference>
<dbReference type="FunFam" id="1.20.1250.20:FF:000184">
    <property type="entry name" value="Feline leukemia virus subgroup C receptor-related protein 1"/>
    <property type="match status" value="1"/>
</dbReference>
<dbReference type="Gene3D" id="1.20.1250.20">
    <property type="entry name" value="MFS general substrate transporter like domains"/>
    <property type="match status" value="2"/>
</dbReference>
<dbReference type="InterPro" id="IPR049680">
    <property type="entry name" value="FLVCR1-2_SLC49-like"/>
</dbReference>
<dbReference type="InterPro" id="IPR011701">
    <property type="entry name" value="MFS"/>
</dbReference>
<dbReference type="InterPro" id="IPR020846">
    <property type="entry name" value="MFS_dom"/>
</dbReference>
<dbReference type="InterPro" id="IPR036259">
    <property type="entry name" value="MFS_trans_sf"/>
</dbReference>
<dbReference type="PANTHER" id="PTHR10924:SF2">
    <property type="entry name" value="HEME TRANSPORTER FLVCR1"/>
    <property type="match status" value="1"/>
</dbReference>
<dbReference type="PANTHER" id="PTHR10924">
    <property type="entry name" value="MAJOR FACILITATOR SUPERFAMILY PROTEIN-RELATED"/>
    <property type="match status" value="1"/>
</dbReference>
<dbReference type="Pfam" id="PF07690">
    <property type="entry name" value="MFS_1"/>
    <property type="match status" value="1"/>
</dbReference>
<dbReference type="SUPFAM" id="SSF103473">
    <property type="entry name" value="MFS general substrate transporter"/>
    <property type="match status" value="1"/>
</dbReference>
<dbReference type="PROSITE" id="PS50850">
    <property type="entry name" value="MFS"/>
    <property type="match status" value="1"/>
</dbReference>
<name>FLVC1_FELCA</name>
<comment type="function">
    <text evidence="1">Uniporter that mediates the transport of extracellular choline and ethanolamine into cells, thereby playing a key role in phospholipid biosynthesis. Choline and ethanolamine are the precursors of phosphatidylcholine and phosphatidylethanolamine, respectively, the two most abundant phospholipids. Transport is not coupled with proton transport and is exclusively driven by the choline (or ethanolamine) gradient across the plasma membrane. Also acts as a heme b transporter that mediates heme efflux from the cytoplasm to the extracellular compartment.</text>
</comment>
<comment type="function">
    <text evidence="4">(Microbial infection) Confers susceptibility to Feline leukemia virus subgroup C (FeLV-C) infection, which is associated with fatal erythroid aplasia, also known as aplastic anemia (PubMed:10648427).</text>
</comment>
<comment type="catalytic activity">
    <reaction evidence="1">
        <text>choline(out) = choline(in)</text>
        <dbReference type="Rhea" id="RHEA:32751"/>
        <dbReference type="ChEBI" id="CHEBI:15354"/>
    </reaction>
</comment>
<comment type="catalytic activity">
    <reaction evidence="1">
        <text>ethanolamine(in) = ethanolamine(out)</text>
        <dbReference type="Rhea" id="RHEA:32747"/>
        <dbReference type="ChEBI" id="CHEBI:57603"/>
    </reaction>
</comment>
<comment type="catalytic activity">
    <reaction evidence="1">
        <text>heme b(in) = heme b(out)</text>
        <dbReference type="Rhea" id="RHEA:75443"/>
        <dbReference type="ChEBI" id="CHEBI:60344"/>
    </reaction>
</comment>
<comment type="subcellular location">
    <subcellularLocation>
        <location evidence="1">Cell membrane</location>
        <topology evidence="2">Multi-pass membrane protein</topology>
    </subcellularLocation>
</comment>
<comment type="similarity">
    <text evidence="6">Belongs to the major facilitator superfamily. Feline leukemia virus subgroup C receptor (TC 2.A.1.28.1) family.</text>
</comment>
<proteinExistence type="evidence at protein level"/>
<evidence type="ECO:0000250" key="1">
    <source>
        <dbReference type="UniProtKB" id="Q9Y5Y0"/>
    </source>
</evidence>
<evidence type="ECO:0000255" key="2"/>
<evidence type="ECO:0000256" key="3">
    <source>
        <dbReference type="SAM" id="MobiDB-lite"/>
    </source>
</evidence>
<evidence type="ECO:0000269" key="4">
    <source>
    </source>
</evidence>
<evidence type="ECO:0000303" key="5">
    <source>
    </source>
</evidence>
<evidence type="ECO:0000305" key="6"/>
<gene>
    <name type="primary">FLVCR1</name>
</gene>
<keyword id="KW-1003">Cell membrane</keyword>
<keyword id="KW-0265">Erythrocyte maturation</keyword>
<keyword id="KW-0325">Glycoprotein</keyword>
<keyword id="KW-1183">Host cell receptor for virus entry</keyword>
<keyword id="KW-0472">Membrane</keyword>
<keyword id="KW-0597">Phosphoprotein</keyword>
<keyword id="KW-0675">Receptor</keyword>
<keyword id="KW-1185">Reference proteome</keyword>
<keyword id="KW-0812">Transmembrane</keyword>
<keyword id="KW-1133">Transmembrane helix</keyword>
<keyword id="KW-0813">Transport</keyword>
<reference key="1">
    <citation type="journal article" date="2000" name="Blood">
        <title>Cloning of the cellular receptor for feline leukemia virus subgroup C (FeLV-C), a retrovirus that induces red cell aplasia.</title>
        <authorList>
            <person name="Quigley J.G."/>
            <person name="Burns C.C."/>
            <person name="Anderson M.M."/>
            <person name="Lynch E.D."/>
            <person name="Sabo K.M."/>
            <person name="Overbaugh J."/>
            <person name="Abkowitz J.L."/>
        </authorList>
    </citation>
    <scope>NUCLEOTIDE SEQUENCE [MRNA]</scope>
    <scope>FUNCTION (MICROBIAL INFECTION)</scope>
    <scope>CHARACTERIZATION OF FELV-C RECEPTOR FUNCTION</scope>
    <source>
        <tissue>T-cell</tissue>
    </source>
</reference>
<reference key="2">
    <citation type="journal article" date="2000" name="Blood">
        <authorList>
            <person name="Quigley J.G."/>
            <person name="Burns C.C."/>
            <person name="Anderson M.M."/>
            <person name="Lynch E.D."/>
            <person name="Sabo K.M."/>
            <person name="Overbaugh J."/>
            <person name="Abkowitz J.L."/>
        </authorList>
    </citation>
    <scope>ERRATUM OF PUBMED:10648427</scope>
</reference>